<comment type="subcellular location">
    <subcellularLocation>
        <location evidence="3">Host membrane</location>
        <topology evidence="3">Single-pass membrane protein</topology>
    </subcellularLocation>
    <subcellularLocation>
        <location evidence="1">Virion</location>
    </subcellularLocation>
</comment>
<comment type="induction">
    <text evidence="3">Expressed in the late phase of the viral replicative cycle.</text>
</comment>
<comment type="similarity">
    <text evidence="3">Belongs to the asfivirus E146L family.</text>
</comment>
<keyword id="KW-1043">Host membrane</keyword>
<keyword id="KW-0472">Membrane</keyword>
<keyword id="KW-0812">Transmembrane</keyword>
<keyword id="KW-1133">Transmembrane helix</keyword>
<keyword id="KW-0946">Virion</keyword>
<reference key="1">
    <citation type="submission" date="2003-03" db="EMBL/GenBank/DDBJ databases">
        <title>African swine fever virus genomes.</title>
        <authorList>
            <person name="Kutish G.F."/>
            <person name="Rock D.L."/>
        </authorList>
    </citation>
    <scope>NUCLEOTIDE SEQUENCE [LARGE SCALE GENOMIC DNA]</scope>
</reference>
<accession>P0CA52</accession>
<feature type="chain" id="PRO_0000373525" description="Uncharacterized protein E146L">
    <location>
        <begin position="1"/>
        <end position="146"/>
    </location>
</feature>
<feature type="transmembrane region" description="Helical" evidence="2">
    <location>
        <begin position="7"/>
        <end position="27"/>
    </location>
</feature>
<gene>
    <name type="ordered locus">Ken-141</name>
</gene>
<sequence length="146" mass="16082">MGGTTDFVLSITIVLVILIIIAYIWYNFTGWSPFKYSKGNTVTFKTPDDSSIAYMRFKNCVFTFTDPKGSLHSIDVTNVLNNMAKGFRDAQNPPSSFTLGGHCQAPLNAFSFILPGVNDRATVATADDAKKWENCDATLTGLQRII</sequence>
<organismHost>
    <name type="scientific">Ornithodoros</name>
    <name type="common">relapsing fever ticks</name>
    <dbReference type="NCBI Taxonomy" id="6937"/>
</organismHost>
<organismHost>
    <name type="scientific">Phacochoerus aethiopicus</name>
    <name type="common">Warthog</name>
    <dbReference type="NCBI Taxonomy" id="85517"/>
</organismHost>
<organismHost>
    <name type="scientific">Phacochoerus africanus</name>
    <name type="common">Warthog</name>
    <dbReference type="NCBI Taxonomy" id="41426"/>
</organismHost>
<organismHost>
    <name type="scientific">Potamochoerus larvatus</name>
    <name type="common">Bushpig</name>
    <dbReference type="NCBI Taxonomy" id="273792"/>
</organismHost>
<organismHost>
    <name type="scientific">Sus scrofa</name>
    <name type="common">Pig</name>
    <dbReference type="NCBI Taxonomy" id="9823"/>
</organismHost>
<name>VF146_ASFK5</name>
<organism>
    <name type="scientific">African swine fever virus (isolate Pig/Kenya/KEN-50/1950)</name>
    <name type="common">ASFV</name>
    <dbReference type="NCBI Taxonomy" id="561445"/>
    <lineage>
        <taxon>Viruses</taxon>
        <taxon>Varidnaviria</taxon>
        <taxon>Bamfordvirae</taxon>
        <taxon>Nucleocytoviricota</taxon>
        <taxon>Pokkesviricetes</taxon>
        <taxon>Asfuvirales</taxon>
        <taxon>Asfarviridae</taxon>
        <taxon>Asfivirus</taxon>
        <taxon>African swine fever virus</taxon>
    </lineage>
</organism>
<evidence type="ECO:0000250" key="1">
    <source>
        <dbReference type="UniProtKB" id="Q65197"/>
    </source>
</evidence>
<evidence type="ECO:0000255" key="2"/>
<evidence type="ECO:0000305" key="3"/>
<protein>
    <recommendedName>
        <fullName>Uncharacterized protein E146L</fullName>
        <shortName>pE146L</shortName>
    </recommendedName>
</protein>
<proteinExistence type="inferred from homology"/>
<dbReference type="EMBL" id="AY261360">
    <property type="status" value="NOT_ANNOTATED_CDS"/>
    <property type="molecule type" value="Genomic_DNA"/>
</dbReference>
<dbReference type="SMR" id="P0CA52"/>
<dbReference type="Proteomes" id="UP000000861">
    <property type="component" value="Segment"/>
</dbReference>
<dbReference type="GO" id="GO:0033644">
    <property type="term" value="C:host cell membrane"/>
    <property type="evidence" value="ECO:0007669"/>
    <property type="project" value="UniProtKB-SubCell"/>
</dbReference>
<dbReference type="GO" id="GO:0016020">
    <property type="term" value="C:membrane"/>
    <property type="evidence" value="ECO:0007669"/>
    <property type="project" value="UniProtKB-KW"/>
</dbReference>
<dbReference type="GO" id="GO:0044423">
    <property type="term" value="C:virion component"/>
    <property type="evidence" value="ECO:0007669"/>
    <property type="project" value="UniProtKB-KW"/>
</dbReference>